<reference key="1">
    <citation type="submission" date="2007-03" db="EMBL/GenBank/DDBJ databases">
        <title>The NIAID influenza genome sequencing project.</title>
        <authorList>
            <person name="Ghedin E."/>
            <person name="Spiro D."/>
            <person name="Miller N."/>
            <person name="Zaborsky J."/>
            <person name="Feldblyum T."/>
            <person name="Subbu V."/>
            <person name="Shumway M."/>
            <person name="Sparenborg J."/>
            <person name="Groveman L."/>
            <person name="Halpin R."/>
            <person name="Sitz J."/>
            <person name="Koo H."/>
            <person name="Salzberg S.L."/>
            <person name="Webster R.G."/>
            <person name="Hoffmann E."/>
            <person name="Krauss S."/>
            <person name="Naeve C."/>
            <person name="Bao Y."/>
            <person name="Bolotov P."/>
            <person name="Dernovoy D."/>
            <person name="Kiryutin B."/>
            <person name="Lipman D.J."/>
            <person name="Tatusova T."/>
        </authorList>
    </citation>
    <scope>NUCLEOTIDE SEQUENCE [GENOMIC RNA]</scope>
</reference>
<reference key="2">
    <citation type="submission" date="2007-03" db="EMBL/GenBank/DDBJ databases">
        <authorList>
            <consortium name="The NIAID Influenza Genome Sequencing Consortium"/>
        </authorList>
    </citation>
    <scope>NUCLEOTIDE SEQUENCE [GENOMIC RNA]</scope>
</reference>
<sequence>MSLLTEVETYVLSIVPSGPLKAEIAQRLEDVFAGKNTDLEALMEWLKTRPILSPLTKGILGFVFTLTVPSERGLQRRRFVQNALNGNGDPNNMDKAVKLYRKIKREITFHGAKEIALSYSAGALASCMGLIYNRMGAVTTEVAFGLVCATCEQIADSQHRSHRQMVTTTNPLIRHENRMVLASTTAKAMEQMAGSSERAAEAMEVASQARQMVQAMRTIGTHPSSSAGLKDDLLENLQAYQKRMGVQMQRFK</sequence>
<accession>A4GCM1</accession>
<comment type="function">
    <text evidence="1">Plays critical roles in virus replication, from virus entry and uncoating to assembly and budding of the virus particle. M1 binding to ribonucleocapsids (RNPs) in nucleus seems to inhibit viral transcription. Interaction of viral NEP with M1-RNP is thought to promote nuclear export of the complex, which is targeted to the virion assembly site at the apical plasma membrane in polarized epithelial cells. Interactions with NA and HA may bring M1, a non-raft-associated protein, into lipid rafts. Forms a continuous shell on the inner side of the lipid bilayer in virion, where it binds the RNP. During virus entry into cell, the M2 ion channel acidifies the internal virion core, inducing M1 dissociation from the RNP. M1-free RNPs are transported to the nucleus, where viral transcription and replication can take place.</text>
</comment>
<comment type="function">
    <text evidence="1">Determines the virion's shape: spherical or filamentous. Clinical isolates of influenza are characterized by the presence of significant proportion of filamentous virions, whereas after multiple passage on eggs or cell culture, virions have only spherical morphology. Filamentous virions are thought to be important to infect neighboring cells, and spherical virions more suited to spread through aerosol between hosts organisms.</text>
</comment>
<comment type="subunit">
    <text evidence="1">Homodimer and homomultimer. Interacts with NEP. Binds ribonucleocapsid by both interacting with genomic RNA and NP protein. May interact with HA and NA. Cannot bind NP without genomic RNA.</text>
</comment>
<comment type="subcellular location">
    <subcellularLocation>
        <location evidence="1">Virion membrane</location>
        <topology evidence="1">Peripheral membrane protein</topology>
        <orientation evidence="1">Cytoplasmic side</orientation>
    </subcellularLocation>
    <subcellularLocation>
        <location evidence="1">Host nucleus</location>
    </subcellularLocation>
</comment>
<comment type="alternative products">
    <event type="alternative splicing"/>
    <isoform>
        <id>A4GCM1-1</id>
        <name>M1</name>
        <sequence type="displayed"/>
    </isoform>
    <isoform>
        <id>A4GCM0-1</id>
        <name>M2</name>
        <sequence type="external"/>
    </isoform>
    <text>Only the first 9 residues are shared by the 2 isoforms.</text>
</comment>
<comment type="miscellaneous">
    <text evidence="1">Most abundant protein in virion. When expressed alone can form virus-like particles in transfected cells.</text>
</comment>
<comment type="similarity">
    <text evidence="1">Belongs to the influenza viruses Matrix protein M1 family.</text>
</comment>
<feature type="chain" id="PRO_0000372902" description="Matrix protein 1">
    <location>
        <begin position="1"/>
        <end position="252"/>
    </location>
</feature>
<feature type="region of interest" description="Membrane-binding" evidence="1">
    <location>
        <begin position="1"/>
        <end position="164"/>
    </location>
</feature>
<feature type="region of interest" description="RNP-binding" evidence="1">
    <location>
        <begin position="165"/>
        <end position="252"/>
    </location>
</feature>
<feature type="short sequence motif" description="Nuclear localization signal" evidence="1">
    <location>
        <begin position="101"/>
        <end position="105"/>
    </location>
</feature>
<protein>
    <recommendedName>
        <fullName evidence="1">Matrix protein 1</fullName>
        <shortName evidence="1">M1</shortName>
    </recommendedName>
</protein>
<proteinExistence type="inferred from homology"/>
<dbReference type="EMBL" id="CY020470">
    <property type="protein sequence ID" value="ABO38385.1"/>
    <property type="molecule type" value="Viral_cRNA"/>
</dbReference>
<dbReference type="SMR" id="A4GCM1"/>
<dbReference type="Proteomes" id="UP000000829">
    <property type="component" value="Genome"/>
</dbReference>
<dbReference type="GO" id="GO:0042025">
    <property type="term" value="C:host cell nucleus"/>
    <property type="evidence" value="ECO:0007669"/>
    <property type="project" value="UniProtKB-SubCell"/>
</dbReference>
<dbReference type="GO" id="GO:0016020">
    <property type="term" value="C:membrane"/>
    <property type="evidence" value="ECO:0007669"/>
    <property type="project" value="UniProtKB-KW"/>
</dbReference>
<dbReference type="GO" id="GO:0055036">
    <property type="term" value="C:virion membrane"/>
    <property type="evidence" value="ECO:0007669"/>
    <property type="project" value="UniProtKB-SubCell"/>
</dbReference>
<dbReference type="GO" id="GO:0003723">
    <property type="term" value="F:RNA binding"/>
    <property type="evidence" value="ECO:0007669"/>
    <property type="project" value="UniProtKB-UniRule"/>
</dbReference>
<dbReference type="GO" id="GO:0039660">
    <property type="term" value="F:structural constituent of virion"/>
    <property type="evidence" value="ECO:0007669"/>
    <property type="project" value="UniProtKB-UniRule"/>
</dbReference>
<dbReference type="GO" id="GO:0046761">
    <property type="term" value="P:viral budding from plasma membrane"/>
    <property type="evidence" value="ECO:0007669"/>
    <property type="project" value="UniProtKB-UniRule"/>
</dbReference>
<dbReference type="FunFam" id="1.10.10.180:FF:000001">
    <property type="entry name" value="Matrix protein 1"/>
    <property type="match status" value="1"/>
</dbReference>
<dbReference type="FunFam" id="1.20.91.10:FF:000001">
    <property type="entry name" value="Matrix protein 1"/>
    <property type="match status" value="1"/>
</dbReference>
<dbReference type="Gene3D" id="1.10.10.180">
    <property type="match status" value="1"/>
</dbReference>
<dbReference type="Gene3D" id="1.20.91.10">
    <property type="match status" value="1"/>
</dbReference>
<dbReference type="HAMAP" id="MF_04068">
    <property type="entry name" value="INFV_M1"/>
    <property type="match status" value="1"/>
</dbReference>
<dbReference type="InterPro" id="IPR036039">
    <property type="entry name" value="Flu_matrix_M1"/>
</dbReference>
<dbReference type="InterPro" id="IPR013188">
    <property type="entry name" value="Flu_matrix_M1_C"/>
</dbReference>
<dbReference type="InterPro" id="IPR001561">
    <property type="entry name" value="Flu_matrix_M1_N"/>
</dbReference>
<dbReference type="InterPro" id="IPR015423">
    <property type="entry name" value="Flu_matrix_M1_N_sub1"/>
</dbReference>
<dbReference type="InterPro" id="IPR015799">
    <property type="entry name" value="Flu_matrix_M1_N_sub2"/>
</dbReference>
<dbReference type="InterPro" id="IPR037533">
    <property type="entry name" value="INFV_M1"/>
</dbReference>
<dbReference type="Pfam" id="PF00598">
    <property type="entry name" value="Flu_M1"/>
    <property type="match status" value="1"/>
</dbReference>
<dbReference type="Pfam" id="PF08289">
    <property type="entry name" value="Flu_M1_C"/>
    <property type="match status" value="1"/>
</dbReference>
<dbReference type="SMART" id="SM00759">
    <property type="entry name" value="Flu_M1_C"/>
    <property type="match status" value="1"/>
</dbReference>
<dbReference type="SUPFAM" id="SSF48145">
    <property type="entry name" value="Influenza virus matrix protein M1"/>
    <property type="match status" value="1"/>
</dbReference>
<evidence type="ECO:0000255" key="1">
    <source>
        <dbReference type="HAMAP-Rule" id="MF_04068"/>
    </source>
</evidence>
<organism>
    <name type="scientific">Influenza A virus (strain A/USA:Phila/1935 H1N1)</name>
    <dbReference type="NCBI Taxonomy" id="425570"/>
    <lineage>
        <taxon>Viruses</taxon>
        <taxon>Riboviria</taxon>
        <taxon>Orthornavirae</taxon>
        <taxon>Negarnaviricota</taxon>
        <taxon>Polyploviricotina</taxon>
        <taxon>Insthoviricetes</taxon>
        <taxon>Articulavirales</taxon>
        <taxon>Orthomyxoviridae</taxon>
        <taxon>Alphainfluenzavirus</taxon>
        <taxon>Alphainfluenzavirus influenzae</taxon>
        <taxon>Influenza A virus</taxon>
    </lineage>
</organism>
<keyword id="KW-0025">Alternative splicing</keyword>
<keyword id="KW-1048">Host nucleus</keyword>
<keyword id="KW-0472">Membrane</keyword>
<keyword id="KW-0694">RNA-binding</keyword>
<keyword id="KW-0468">Viral matrix protein</keyword>
<keyword id="KW-0946">Virion</keyword>
<name>M1_I35A3</name>
<gene>
    <name evidence="1" type="primary">M</name>
</gene>
<organismHost>
    <name type="scientific">Aves</name>
    <dbReference type="NCBI Taxonomy" id="8782"/>
</organismHost>
<organismHost>
    <name type="scientific">Homo sapiens</name>
    <name type="common">Human</name>
    <dbReference type="NCBI Taxonomy" id="9606"/>
</organismHost>
<organismHost>
    <name type="scientific">Sus scrofa</name>
    <name type="common">Pig</name>
    <dbReference type="NCBI Taxonomy" id="9823"/>
</organismHost>